<evidence type="ECO:0000255" key="1">
    <source>
        <dbReference type="HAMAP-Rule" id="MF_01357"/>
    </source>
</evidence>
<accession>Q1MIL3</accession>
<sequence>MSEALTELASYLGEARGNLIAASQMKYGELTLTTTGENLVALLTFLRDDAKCGFVNLIDICGVDWPQRELRFDVVYHLLSPKKNLRIRVKVATDEDTPVPSACPVYPGADWFERETWDMYGVLFTGHPDLRRILTDYGFEGHPLRKDFPTTGFVEVRYDDAAKRVVYEPVELKQEFRNFDFMSPWEGTEYVLPGDEKAKQ</sequence>
<proteinExistence type="inferred from homology"/>
<reference key="1">
    <citation type="journal article" date="2006" name="Genome Biol.">
        <title>The genome of Rhizobium leguminosarum has recognizable core and accessory components.</title>
        <authorList>
            <person name="Young J.P.W."/>
            <person name="Crossman L.C."/>
            <person name="Johnston A.W.B."/>
            <person name="Thomson N.R."/>
            <person name="Ghazoui Z.F."/>
            <person name="Hull K.H."/>
            <person name="Wexler M."/>
            <person name="Curson A.R.J."/>
            <person name="Todd J.D."/>
            <person name="Poole P.S."/>
            <person name="Mauchline T.H."/>
            <person name="East A.K."/>
            <person name="Quail M.A."/>
            <person name="Churcher C."/>
            <person name="Arrowsmith C."/>
            <person name="Cherevach I."/>
            <person name="Chillingworth T."/>
            <person name="Clarke K."/>
            <person name="Cronin A."/>
            <person name="Davis P."/>
            <person name="Fraser A."/>
            <person name="Hance Z."/>
            <person name="Hauser H."/>
            <person name="Jagels K."/>
            <person name="Moule S."/>
            <person name="Mungall K."/>
            <person name="Norbertczak H."/>
            <person name="Rabbinowitsch E."/>
            <person name="Sanders M."/>
            <person name="Simmonds M."/>
            <person name="Whitehead S."/>
            <person name="Parkhill J."/>
        </authorList>
    </citation>
    <scope>NUCLEOTIDE SEQUENCE [LARGE SCALE GENOMIC DNA]</scope>
    <source>
        <strain>DSM 114642 / LMG 32736 / 3841</strain>
    </source>
</reference>
<gene>
    <name evidence="1" type="primary">nuoC</name>
    <name type="ordered locus">RL1702</name>
</gene>
<keyword id="KW-0997">Cell inner membrane</keyword>
<keyword id="KW-1003">Cell membrane</keyword>
<keyword id="KW-0472">Membrane</keyword>
<keyword id="KW-0520">NAD</keyword>
<keyword id="KW-0874">Quinone</keyword>
<keyword id="KW-1278">Translocase</keyword>
<keyword id="KW-0813">Transport</keyword>
<keyword id="KW-0830">Ubiquinone</keyword>
<dbReference type="EC" id="7.1.1.-" evidence="1"/>
<dbReference type="EMBL" id="AM236080">
    <property type="protein sequence ID" value="CAK07197.1"/>
    <property type="molecule type" value="Genomic_DNA"/>
</dbReference>
<dbReference type="RefSeq" id="WP_003558447.1">
    <property type="nucleotide sequence ID" value="NC_008380.1"/>
</dbReference>
<dbReference type="SMR" id="Q1MIL3"/>
<dbReference type="EnsemblBacteria" id="CAK07197">
    <property type="protein sequence ID" value="CAK07197"/>
    <property type="gene ID" value="RL1702"/>
</dbReference>
<dbReference type="KEGG" id="rle:RL1702"/>
<dbReference type="eggNOG" id="COG0852">
    <property type="taxonomic scope" value="Bacteria"/>
</dbReference>
<dbReference type="HOGENOM" id="CLU_042628_2_1_5"/>
<dbReference type="Proteomes" id="UP000006575">
    <property type="component" value="Chromosome"/>
</dbReference>
<dbReference type="GO" id="GO:0005886">
    <property type="term" value="C:plasma membrane"/>
    <property type="evidence" value="ECO:0007669"/>
    <property type="project" value="UniProtKB-SubCell"/>
</dbReference>
<dbReference type="GO" id="GO:0008137">
    <property type="term" value="F:NADH dehydrogenase (ubiquinone) activity"/>
    <property type="evidence" value="ECO:0007669"/>
    <property type="project" value="InterPro"/>
</dbReference>
<dbReference type="GO" id="GO:0050136">
    <property type="term" value="F:NADH:ubiquinone reductase (non-electrogenic) activity"/>
    <property type="evidence" value="ECO:0007669"/>
    <property type="project" value="UniProtKB-UniRule"/>
</dbReference>
<dbReference type="GO" id="GO:0048038">
    <property type="term" value="F:quinone binding"/>
    <property type="evidence" value="ECO:0007669"/>
    <property type="project" value="UniProtKB-KW"/>
</dbReference>
<dbReference type="Gene3D" id="3.30.460.80">
    <property type="entry name" value="NADH:ubiquinone oxidoreductase, 30kDa subunit"/>
    <property type="match status" value="1"/>
</dbReference>
<dbReference type="HAMAP" id="MF_01357">
    <property type="entry name" value="NDH1_NuoC"/>
    <property type="match status" value="1"/>
</dbReference>
<dbReference type="InterPro" id="IPR010218">
    <property type="entry name" value="NADH_DH_suC"/>
</dbReference>
<dbReference type="InterPro" id="IPR037232">
    <property type="entry name" value="NADH_quin_OxRdtase_su_C/D-like"/>
</dbReference>
<dbReference type="InterPro" id="IPR001268">
    <property type="entry name" value="NADH_UbQ_OxRdtase_30kDa_su"/>
</dbReference>
<dbReference type="InterPro" id="IPR020396">
    <property type="entry name" value="NADH_UbQ_OxRdtase_CS"/>
</dbReference>
<dbReference type="NCBIfam" id="TIGR01961">
    <property type="entry name" value="NuoC_fam"/>
    <property type="match status" value="1"/>
</dbReference>
<dbReference type="NCBIfam" id="NF004733">
    <property type="entry name" value="PRK06074.1-5"/>
    <property type="match status" value="1"/>
</dbReference>
<dbReference type="PANTHER" id="PTHR10884:SF14">
    <property type="entry name" value="NADH DEHYDROGENASE [UBIQUINONE] IRON-SULFUR PROTEIN 3, MITOCHONDRIAL"/>
    <property type="match status" value="1"/>
</dbReference>
<dbReference type="PANTHER" id="PTHR10884">
    <property type="entry name" value="NADH DEHYDROGENASE UBIQUINONE IRON-SULFUR PROTEIN 3"/>
    <property type="match status" value="1"/>
</dbReference>
<dbReference type="Pfam" id="PF00329">
    <property type="entry name" value="Complex1_30kDa"/>
    <property type="match status" value="1"/>
</dbReference>
<dbReference type="SUPFAM" id="SSF143243">
    <property type="entry name" value="Nqo5-like"/>
    <property type="match status" value="1"/>
</dbReference>
<dbReference type="PROSITE" id="PS00542">
    <property type="entry name" value="COMPLEX1_30K"/>
    <property type="match status" value="1"/>
</dbReference>
<protein>
    <recommendedName>
        <fullName evidence="1">NADH-quinone oxidoreductase subunit C</fullName>
        <ecNumber evidence="1">7.1.1.-</ecNumber>
    </recommendedName>
    <alternativeName>
        <fullName evidence="1">NADH dehydrogenase I subunit C</fullName>
    </alternativeName>
    <alternativeName>
        <fullName evidence="1">NDH-1 subunit C</fullName>
    </alternativeName>
</protein>
<name>NUOC_RHIJ3</name>
<comment type="function">
    <text evidence="1">NDH-1 shuttles electrons from NADH, via FMN and iron-sulfur (Fe-S) centers, to quinones in the respiratory chain. The immediate electron acceptor for the enzyme in this species is believed to be ubiquinone. Couples the redox reaction to proton translocation (for every two electrons transferred, four hydrogen ions are translocated across the cytoplasmic membrane), and thus conserves the redox energy in a proton gradient.</text>
</comment>
<comment type="catalytic activity">
    <reaction evidence="1">
        <text>a quinone + NADH + 5 H(+)(in) = a quinol + NAD(+) + 4 H(+)(out)</text>
        <dbReference type="Rhea" id="RHEA:57888"/>
        <dbReference type="ChEBI" id="CHEBI:15378"/>
        <dbReference type="ChEBI" id="CHEBI:24646"/>
        <dbReference type="ChEBI" id="CHEBI:57540"/>
        <dbReference type="ChEBI" id="CHEBI:57945"/>
        <dbReference type="ChEBI" id="CHEBI:132124"/>
    </reaction>
</comment>
<comment type="subunit">
    <text evidence="1">NDH-1 is composed of 14 different subunits. Subunits NuoB, C, D, E, F, and G constitute the peripheral sector of the complex.</text>
</comment>
<comment type="subcellular location">
    <subcellularLocation>
        <location evidence="1">Cell inner membrane</location>
        <topology evidence="1">Peripheral membrane protein</topology>
        <orientation evidence="1">Cytoplasmic side</orientation>
    </subcellularLocation>
</comment>
<comment type="similarity">
    <text evidence="1">Belongs to the complex I 30 kDa subunit family.</text>
</comment>
<organism>
    <name type="scientific">Rhizobium johnstonii (strain DSM 114642 / LMG 32736 / 3841)</name>
    <name type="common">Rhizobium leguminosarum bv. viciae</name>
    <dbReference type="NCBI Taxonomy" id="216596"/>
    <lineage>
        <taxon>Bacteria</taxon>
        <taxon>Pseudomonadati</taxon>
        <taxon>Pseudomonadota</taxon>
        <taxon>Alphaproteobacteria</taxon>
        <taxon>Hyphomicrobiales</taxon>
        <taxon>Rhizobiaceae</taxon>
        <taxon>Rhizobium/Agrobacterium group</taxon>
        <taxon>Rhizobium</taxon>
        <taxon>Rhizobium johnstonii</taxon>
    </lineage>
</organism>
<feature type="chain" id="PRO_0000358181" description="NADH-quinone oxidoreductase subunit C">
    <location>
        <begin position="1"/>
        <end position="200"/>
    </location>
</feature>